<sequence length="301" mass="34091">MNKIISILKPTGMTSHDVVSRVRKILNIKKVGHTGTLDPDASGVLPICIGKATKVCEVILNKDKSYICELTLGISTDTYDASGEILKKVDDFKFSNEDIERAFDTQRGEINQLPPIYSALKVNGKRMCDLVRSGRQSEITLKTRRVNIKDIKILSIKGNKVMFYVECSKGTYVRSICHDIGEYLGCGAHMSFLNRTSSGKFDLDNSITLEELELFYENKTLDKYLYDIDYVLDSFNYVVLNPNAIKYYSNGGSIDDKRFLKNNFDKDDEFVRVYSTDNFLGLGKLSKHNNTISVKSDKMFI</sequence>
<feature type="chain" id="PRO_1000084571" description="tRNA pseudouridine synthase B">
    <location>
        <begin position="1"/>
        <end position="301"/>
    </location>
</feature>
<feature type="active site" description="Nucleophile" evidence="1">
    <location>
        <position position="38"/>
    </location>
</feature>
<evidence type="ECO:0000255" key="1">
    <source>
        <dbReference type="HAMAP-Rule" id="MF_01080"/>
    </source>
</evidence>
<gene>
    <name evidence="1" type="primary">truB</name>
    <name type="ordered locus">CD630_13140</name>
</gene>
<organism>
    <name type="scientific">Clostridioides difficile (strain 630)</name>
    <name type="common">Peptoclostridium difficile</name>
    <dbReference type="NCBI Taxonomy" id="272563"/>
    <lineage>
        <taxon>Bacteria</taxon>
        <taxon>Bacillati</taxon>
        <taxon>Bacillota</taxon>
        <taxon>Clostridia</taxon>
        <taxon>Peptostreptococcales</taxon>
        <taxon>Peptostreptococcaceae</taxon>
        <taxon>Clostridioides</taxon>
    </lineage>
</organism>
<comment type="function">
    <text evidence="1">Responsible for synthesis of pseudouridine from uracil-55 in the psi GC loop of transfer RNAs.</text>
</comment>
<comment type="catalytic activity">
    <reaction evidence="1">
        <text>uridine(55) in tRNA = pseudouridine(55) in tRNA</text>
        <dbReference type="Rhea" id="RHEA:42532"/>
        <dbReference type="Rhea" id="RHEA-COMP:10101"/>
        <dbReference type="Rhea" id="RHEA-COMP:10102"/>
        <dbReference type="ChEBI" id="CHEBI:65314"/>
        <dbReference type="ChEBI" id="CHEBI:65315"/>
        <dbReference type="EC" id="5.4.99.25"/>
    </reaction>
</comment>
<comment type="similarity">
    <text evidence="1">Belongs to the pseudouridine synthase TruB family. Type 1 subfamily.</text>
</comment>
<reference key="1">
    <citation type="journal article" date="2006" name="Nat. Genet.">
        <title>The multidrug-resistant human pathogen Clostridium difficile has a highly mobile, mosaic genome.</title>
        <authorList>
            <person name="Sebaihia M."/>
            <person name="Wren B.W."/>
            <person name="Mullany P."/>
            <person name="Fairweather N.F."/>
            <person name="Minton N."/>
            <person name="Stabler R."/>
            <person name="Thomson N.R."/>
            <person name="Roberts A.P."/>
            <person name="Cerdeno-Tarraga A.M."/>
            <person name="Wang H."/>
            <person name="Holden M.T.G."/>
            <person name="Wright A."/>
            <person name="Churcher C."/>
            <person name="Quail M.A."/>
            <person name="Baker S."/>
            <person name="Bason N."/>
            <person name="Brooks K."/>
            <person name="Chillingworth T."/>
            <person name="Cronin A."/>
            <person name="Davis P."/>
            <person name="Dowd L."/>
            <person name="Fraser A."/>
            <person name="Feltwell T."/>
            <person name="Hance Z."/>
            <person name="Holroyd S."/>
            <person name="Jagels K."/>
            <person name="Moule S."/>
            <person name="Mungall K."/>
            <person name="Price C."/>
            <person name="Rabbinowitsch E."/>
            <person name="Sharp S."/>
            <person name="Simmonds M."/>
            <person name="Stevens K."/>
            <person name="Unwin L."/>
            <person name="Whithead S."/>
            <person name="Dupuy B."/>
            <person name="Dougan G."/>
            <person name="Barrell B."/>
            <person name="Parkhill J."/>
        </authorList>
    </citation>
    <scope>NUCLEOTIDE SEQUENCE [LARGE SCALE GENOMIC DNA]</scope>
    <source>
        <strain>630</strain>
    </source>
</reference>
<keyword id="KW-0413">Isomerase</keyword>
<keyword id="KW-1185">Reference proteome</keyword>
<keyword id="KW-0819">tRNA processing</keyword>
<name>TRUB_CLOD6</name>
<accession>Q18BH7</accession>
<protein>
    <recommendedName>
        <fullName evidence="1">tRNA pseudouridine synthase B</fullName>
        <ecNumber evidence="1">5.4.99.25</ecNumber>
    </recommendedName>
    <alternativeName>
        <fullName evidence="1">tRNA pseudouridine(55) synthase</fullName>
        <shortName evidence="1">Psi55 synthase</shortName>
    </alternativeName>
    <alternativeName>
        <fullName evidence="1">tRNA pseudouridylate synthase</fullName>
    </alternativeName>
    <alternativeName>
        <fullName evidence="1">tRNA-uridine isomerase</fullName>
    </alternativeName>
</protein>
<dbReference type="EC" id="5.4.99.25" evidence="1"/>
<dbReference type="EMBL" id="AM180355">
    <property type="protein sequence ID" value="CAJ68171.1"/>
    <property type="molecule type" value="Genomic_DNA"/>
</dbReference>
<dbReference type="RefSeq" id="WP_003428232.1">
    <property type="nucleotide sequence ID" value="NZ_JAUPES010000015.1"/>
</dbReference>
<dbReference type="RefSeq" id="YP_001087809.1">
    <property type="nucleotide sequence ID" value="NC_009089.1"/>
</dbReference>
<dbReference type="SMR" id="Q18BH7"/>
<dbReference type="STRING" id="272563.CD630_13140"/>
<dbReference type="EnsemblBacteria" id="CAJ68171">
    <property type="protein sequence ID" value="CAJ68171"/>
    <property type="gene ID" value="CD630_13140"/>
</dbReference>
<dbReference type="GeneID" id="66353715"/>
<dbReference type="KEGG" id="cdf:CD630_13140"/>
<dbReference type="KEGG" id="pdc:CDIF630_01470"/>
<dbReference type="PATRIC" id="fig|272563.120.peg.1374"/>
<dbReference type="eggNOG" id="COG0130">
    <property type="taxonomic scope" value="Bacteria"/>
</dbReference>
<dbReference type="OrthoDB" id="9802309at2"/>
<dbReference type="PhylomeDB" id="Q18BH7"/>
<dbReference type="BioCyc" id="PDIF272563:G12WB-1448-MONOMER"/>
<dbReference type="Proteomes" id="UP000001978">
    <property type="component" value="Chromosome"/>
</dbReference>
<dbReference type="GO" id="GO:0003723">
    <property type="term" value="F:RNA binding"/>
    <property type="evidence" value="ECO:0007669"/>
    <property type="project" value="InterPro"/>
</dbReference>
<dbReference type="GO" id="GO:0160148">
    <property type="term" value="F:tRNA pseudouridine(55) synthase activity"/>
    <property type="evidence" value="ECO:0007669"/>
    <property type="project" value="UniProtKB-EC"/>
</dbReference>
<dbReference type="GO" id="GO:1990481">
    <property type="term" value="P:mRNA pseudouridine synthesis"/>
    <property type="evidence" value="ECO:0007669"/>
    <property type="project" value="TreeGrafter"/>
</dbReference>
<dbReference type="GO" id="GO:0031119">
    <property type="term" value="P:tRNA pseudouridine synthesis"/>
    <property type="evidence" value="ECO:0007669"/>
    <property type="project" value="UniProtKB-UniRule"/>
</dbReference>
<dbReference type="CDD" id="cd02573">
    <property type="entry name" value="PseudoU_synth_EcTruB"/>
    <property type="match status" value="1"/>
</dbReference>
<dbReference type="Gene3D" id="3.30.2350.10">
    <property type="entry name" value="Pseudouridine synthase"/>
    <property type="match status" value="1"/>
</dbReference>
<dbReference type="HAMAP" id="MF_01080">
    <property type="entry name" value="TruB_bact"/>
    <property type="match status" value="1"/>
</dbReference>
<dbReference type="InterPro" id="IPR020103">
    <property type="entry name" value="PsdUridine_synth_cat_dom_sf"/>
</dbReference>
<dbReference type="InterPro" id="IPR002501">
    <property type="entry name" value="PsdUridine_synth_N"/>
</dbReference>
<dbReference type="InterPro" id="IPR014780">
    <property type="entry name" value="tRNA_psdUridine_synth_TruB"/>
</dbReference>
<dbReference type="InterPro" id="IPR032819">
    <property type="entry name" value="TruB_C"/>
</dbReference>
<dbReference type="NCBIfam" id="TIGR00431">
    <property type="entry name" value="TruB"/>
    <property type="match status" value="1"/>
</dbReference>
<dbReference type="PANTHER" id="PTHR13767:SF2">
    <property type="entry name" value="PSEUDOURIDYLATE SYNTHASE TRUB1"/>
    <property type="match status" value="1"/>
</dbReference>
<dbReference type="PANTHER" id="PTHR13767">
    <property type="entry name" value="TRNA-PSEUDOURIDINE SYNTHASE"/>
    <property type="match status" value="1"/>
</dbReference>
<dbReference type="Pfam" id="PF16198">
    <property type="entry name" value="TruB_C_2"/>
    <property type="match status" value="1"/>
</dbReference>
<dbReference type="Pfam" id="PF01509">
    <property type="entry name" value="TruB_N"/>
    <property type="match status" value="1"/>
</dbReference>
<dbReference type="SUPFAM" id="SSF55120">
    <property type="entry name" value="Pseudouridine synthase"/>
    <property type="match status" value="1"/>
</dbReference>
<proteinExistence type="inferred from homology"/>